<keyword id="KW-0167">Capsid protein</keyword>
<keyword id="KW-1048">Host nucleus</keyword>
<keyword id="KW-0426">Late protein</keyword>
<keyword id="KW-1185">Reference proteome</keyword>
<keyword id="KW-0231">Viral genome packaging</keyword>
<keyword id="KW-1188">Viral release from host cell</keyword>
<keyword id="KW-0946">Virion</keyword>
<organism>
    <name type="scientific">Human herpesvirus 6A (strain Uganda-1102)</name>
    <name type="common">HHV-6 variant A</name>
    <name type="synonym">Human B lymphotropic virus</name>
    <dbReference type="NCBI Taxonomy" id="10370"/>
    <lineage>
        <taxon>Viruses</taxon>
        <taxon>Duplodnaviria</taxon>
        <taxon>Heunggongvirae</taxon>
        <taxon>Peploviricota</taxon>
        <taxon>Herviviricetes</taxon>
        <taxon>Herpesvirales</taxon>
        <taxon>Orthoherpesviridae</taxon>
        <taxon>Betaherpesvirinae</taxon>
        <taxon>Roseolovirus</taxon>
        <taxon>Roseolovirus humanbeta6a</taxon>
        <taxon>Human betaherpesvirus 6A</taxon>
    </lineage>
</organism>
<accession>P24441</accession>
<sequence length="442" mass="51391">METHLYYDTLYQYQGGVYPAHICLPTDVCLPMRVDCIESLYFRCVFFKSGMHYTEWSKLKFTVISREIKFKDVLKDADSDEVFTGLVVMTIPIPIVDFHFDIDSVILKLVYPRLVHREIVLRLYDLICVRPPSNRPSEASAKNIANDFYQLTSRENKQTPDEEKRCLFFQQGPLEPPSTVRGLKAPGNEKPIQFPAHANEKMTESFLSDSWFGQKVRCKKILDFTQTYQVVVCWYELSFSREMQIENNLLSASQLKRVNAADFWDRTNRYLRDIGSRVLTHIVKTLQIHNRQFKQKFNCNFPDNFSFDRLLSFMQLGKDFWILNLTLDSCIIKAIICFLGFQNGGKSFLAQDEVWGDLIDCSKGSVIYGEKIQWILDSTNNLYSTCREKQNKSWELYVDCCALYVSEKLELDFVLPGGFAITGKFALTDGDIDFFNWRFGLS</sequence>
<name>CVC1_HHV6U</name>
<dbReference type="EMBL" id="X83413">
    <property type="protein sequence ID" value="CAA58356.1"/>
    <property type="molecule type" value="Genomic_DNA"/>
</dbReference>
<dbReference type="EMBL" id="M68963">
    <property type="protein sequence ID" value="AAA65573.1"/>
    <property type="molecule type" value="Genomic_DNA"/>
</dbReference>
<dbReference type="PIR" id="A36769">
    <property type="entry name" value="A36769"/>
</dbReference>
<dbReference type="RefSeq" id="NP_042957.1">
    <property type="nucleotide sequence ID" value="NC_001664.2"/>
</dbReference>
<dbReference type="SMR" id="P24441"/>
<dbReference type="DNASU" id="1487946"/>
<dbReference type="GeneID" id="1487946"/>
<dbReference type="KEGG" id="vg:1487946"/>
<dbReference type="Proteomes" id="UP000009295">
    <property type="component" value="Segment"/>
</dbReference>
<dbReference type="GO" id="GO:0042025">
    <property type="term" value="C:host cell nucleus"/>
    <property type="evidence" value="ECO:0007669"/>
    <property type="project" value="UniProtKB-SubCell"/>
</dbReference>
<dbReference type="GO" id="GO:0019028">
    <property type="term" value="C:viral capsid"/>
    <property type="evidence" value="ECO:0007669"/>
    <property type="project" value="UniProtKB-KW"/>
</dbReference>
<dbReference type="GO" id="GO:0051276">
    <property type="term" value="P:chromosome organization"/>
    <property type="evidence" value="ECO:0007669"/>
    <property type="project" value="InterPro"/>
</dbReference>
<dbReference type="HAMAP" id="MF_04017">
    <property type="entry name" value="HSV_CVC1"/>
    <property type="match status" value="1"/>
</dbReference>
<dbReference type="InterPro" id="IPR007640">
    <property type="entry name" value="UL17-like"/>
</dbReference>
<dbReference type="Pfam" id="PF04559">
    <property type="entry name" value="Herpes_UL17"/>
    <property type="match status" value="1"/>
</dbReference>
<proteinExistence type="inferred from homology"/>
<feature type="chain" id="PRO_0000115959" description="Capsid vertex component 1">
    <location>
        <begin position="1"/>
        <end position="442"/>
    </location>
</feature>
<gene>
    <name evidence="1" type="primary">CVC1</name>
    <name type="ordered locus">10R</name>
    <name type="ordered locus">U64</name>
</gene>
<comment type="function">
    <text evidence="1">Capsid vertex-specific component that plays a role during viral DNA encapsidation, assuring correct genome cleavage and presumably stabilizing capsids that contain full-length viral genomes.</text>
</comment>
<comment type="subunit">
    <text evidence="1">Interacts (via C-terminus) with capsid vertex component 2/CVC2.</text>
</comment>
<comment type="subcellular location">
    <subcellularLocation>
        <location evidence="1">Virion</location>
    </subcellularLocation>
    <subcellularLocation>
        <location evidence="1">Host nucleus</location>
    </subcellularLocation>
</comment>
<comment type="similarity">
    <text evidence="1">Belongs to the herpesviridae CVC1 protein family.</text>
</comment>
<protein>
    <recommendedName>
        <fullName evidence="1">Capsid vertex component 1</fullName>
    </recommendedName>
</protein>
<reference key="1">
    <citation type="journal article" date="1990" name="J. Virol.">
        <title>Human herpesvirus 6 is closely related to human cytomegalovirus.</title>
        <authorList>
            <person name="Lawrence G.L."/>
            <person name="Chee M."/>
            <person name="Craxton M.A."/>
            <person name="Gompels U.A."/>
            <person name="Honess R.W."/>
            <person name="Barrell B.G."/>
        </authorList>
    </citation>
    <scope>NUCLEOTIDE SEQUENCE [GENOMIC DNA]</scope>
</reference>
<reference key="2">
    <citation type="journal article" date="1995" name="Virology">
        <title>The DNA sequence of human herpesvirus-6: structure, coding content, and genome evolution.</title>
        <authorList>
            <person name="Gompels U.A."/>
            <person name="Nicholas J."/>
            <person name="Lawrence G.L."/>
            <person name="Jones M."/>
            <person name="Thomson B.J."/>
            <person name="Martin M.E.D."/>
            <person name="Efstathiou S."/>
            <person name="Craxton M.A."/>
            <person name="Macaulay H.A."/>
        </authorList>
    </citation>
    <scope>NUCLEOTIDE SEQUENCE [LARGE SCALE GENOMIC DNA]</scope>
</reference>
<evidence type="ECO:0000255" key="1">
    <source>
        <dbReference type="HAMAP-Rule" id="MF_04017"/>
    </source>
</evidence>
<organismHost>
    <name type="scientific">Homo sapiens</name>
    <name type="common">Human</name>
    <dbReference type="NCBI Taxonomy" id="9606"/>
</organismHost>